<organism>
    <name type="scientific">Methanosarcina acetivorans (strain ATCC 35395 / DSM 2834 / JCM 12185 / C2A)</name>
    <dbReference type="NCBI Taxonomy" id="188937"/>
    <lineage>
        <taxon>Archaea</taxon>
        <taxon>Methanobacteriati</taxon>
        <taxon>Methanobacteriota</taxon>
        <taxon>Stenosarchaea group</taxon>
        <taxon>Methanomicrobia</taxon>
        <taxon>Methanosarcinales</taxon>
        <taxon>Methanosarcinaceae</taxon>
        <taxon>Methanosarcina</taxon>
    </lineage>
</organism>
<evidence type="ECO:0000255" key="1">
    <source>
        <dbReference type="HAMAP-Rule" id="MF_00127"/>
    </source>
</evidence>
<comment type="catalytic activity">
    <reaction evidence="1">
        <text>tRNA(His) + L-histidine + ATP = L-histidyl-tRNA(His) + AMP + diphosphate + H(+)</text>
        <dbReference type="Rhea" id="RHEA:17313"/>
        <dbReference type="Rhea" id="RHEA-COMP:9665"/>
        <dbReference type="Rhea" id="RHEA-COMP:9689"/>
        <dbReference type="ChEBI" id="CHEBI:15378"/>
        <dbReference type="ChEBI" id="CHEBI:30616"/>
        <dbReference type="ChEBI" id="CHEBI:33019"/>
        <dbReference type="ChEBI" id="CHEBI:57595"/>
        <dbReference type="ChEBI" id="CHEBI:78442"/>
        <dbReference type="ChEBI" id="CHEBI:78527"/>
        <dbReference type="ChEBI" id="CHEBI:456215"/>
        <dbReference type="EC" id="6.1.1.21"/>
    </reaction>
</comment>
<comment type="subcellular location">
    <subcellularLocation>
        <location evidence="1">Cytoplasm</location>
    </subcellularLocation>
</comment>
<comment type="similarity">
    <text evidence="1">Belongs to the class-II aminoacyl-tRNA synthetase family.</text>
</comment>
<protein>
    <recommendedName>
        <fullName evidence="1">Histidine--tRNA ligase</fullName>
        <ecNumber evidence="1">6.1.1.21</ecNumber>
    </recommendedName>
    <alternativeName>
        <fullName evidence="1">Histidyl-tRNA synthetase</fullName>
        <shortName evidence="1">HisRS</shortName>
    </alternativeName>
</protein>
<accession>Q8TS62</accession>
<feature type="chain" id="PRO_0000136311" description="Histidine--tRNA ligase">
    <location>
        <begin position="1"/>
        <end position="413"/>
    </location>
</feature>
<gene>
    <name evidence="1" type="primary">hisS</name>
    <name type="ordered locus">MA_0943</name>
</gene>
<keyword id="KW-0030">Aminoacyl-tRNA synthetase</keyword>
<keyword id="KW-0067">ATP-binding</keyword>
<keyword id="KW-0963">Cytoplasm</keyword>
<keyword id="KW-0436">Ligase</keyword>
<keyword id="KW-0547">Nucleotide-binding</keyword>
<keyword id="KW-0648">Protein biosynthesis</keyword>
<keyword id="KW-1185">Reference proteome</keyword>
<sequence length="413" mass="46313">MTVNRPRGTRDFLPADTARRRYVESVMRNVVRNWGYSEIITPTFEHLDLFTLKSGEGIVGELYNFTDKGGRDMTLRPELTAPVMRLYVNELQPFPKPLKLFYFENCFRYERPQKGRFREFWQFGVELIGSGKSDSDAEVIALADALLKAVGIQGDMKLGNLAVIRTLLKGLEPEIVSKVMRLVDKKEYAGLESLLEEIGAEEQLKSDLFHLIHLEGKYILPKVKEIVGNIPELVGFEKTLKLLDAYGVDYSLDFGIARGLDYYTGMVFEVYAEGLGAQKQVCGGGSYQLIQLFGGGDVPSTGFGIGFDRIMEICPLVPPASKNLVLVSKPATHIEAVKVASELRNYLPVQIDLMERNFKAQFSYANTINADYVVIVGEKELEAGKLTLRDMVSGEQELLTLEEIIEKITGQQD</sequence>
<dbReference type="EC" id="6.1.1.21" evidence="1"/>
<dbReference type="EMBL" id="AE010299">
    <property type="protein sequence ID" value="AAM04376.1"/>
    <property type="molecule type" value="Genomic_DNA"/>
</dbReference>
<dbReference type="RefSeq" id="WP_011020981.1">
    <property type="nucleotide sequence ID" value="NC_003552.1"/>
</dbReference>
<dbReference type="SMR" id="Q8TS62"/>
<dbReference type="FunCoup" id="Q8TS62">
    <property type="interactions" value="185"/>
</dbReference>
<dbReference type="STRING" id="188937.MA_0943"/>
<dbReference type="EnsemblBacteria" id="AAM04376">
    <property type="protein sequence ID" value="AAM04376"/>
    <property type="gene ID" value="MA_0943"/>
</dbReference>
<dbReference type="GeneID" id="1472833"/>
<dbReference type="KEGG" id="mac:MA_0943"/>
<dbReference type="HOGENOM" id="CLU_025113_3_1_2"/>
<dbReference type="InParanoid" id="Q8TS62"/>
<dbReference type="OrthoDB" id="8659at2157"/>
<dbReference type="PhylomeDB" id="Q8TS62"/>
<dbReference type="Proteomes" id="UP000002487">
    <property type="component" value="Chromosome"/>
</dbReference>
<dbReference type="GO" id="GO:0005737">
    <property type="term" value="C:cytoplasm"/>
    <property type="evidence" value="ECO:0007669"/>
    <property type="project" value="UniProtKB-SubCell"/>
</dbReference>
<dbReference type="GO" id="GO:0005524">
    <property type="term" value="F:ATP binding"/>
    <property type="evidence" value="ECO:0007669"/>
    <property type="project" value="UniProtKB-UniRule"/>
</dbReference>
<dbReference type="GO" id="GO:0004821">
    <property type="term" value="F:histidine-tRNA ligase activity"/>
    <property type="evidence" value="ECO:0000318"/>
    <property type="project" value="GO_Central"/>
</dbReference>
<dbReference type="GO" id="GO:0006427">
    <property type="term" value="P:histidyl-tRNA aminoacylation"/>
    <property type="evidence" value="ECO:0000318"/>
    <property type="project" value="GO_Central"/>
</dbReference>
<dbReference type="GO" id="GO:0000105">
    <property type="term" value="P:L-histidine biosynthetic process"/>
    <property type="evidence" value="ECO:0007669"/>
    <property type="project" value="InterPro"/>
</dbReference>
<dbReference type="CDD" id="cd00773">
    <property type="entry name" value="HisRS-like_core"/>
    <property type="match status" value="1"/>
</dbReference>
<dbReference type="CDD" id="cd00859">
    <property type="entry name" value="HisRS_anticodon"/>
    <property type="match status" value="1"/>
</dbReference>
<dbReference type="FunFam" id="3.30.930.10:FF:000054">
    <property type="entry name" value="Histidine--tRNA ligase chloroplastic/mitochondrial"/>
    <property type="match status" value="1"/>
</dbReference>
<dbReference type="Gene3D" id="3.40.50.800">
    <property type="entry name" value="Anticodon-binding domain"/>
    <property type="match status" value="1"/>
</dbReference>
<dbReference type="Gene3D" id="3.30.930.10">
    <property type="entry name" value="Bira Bifunctional Protein, Domain 2"/>
    <property type="match status" value="1"/>
</dbReference>
<dbReference type="HAMAP" id="MF_00127">
    <property type="entry name" value="His_tRNA_synth"/>
    <property type="match status" value="1"/>
</dbReference>
<dbReference type="HAMAP" id="MF_00125">
    <property type="entry name" value="HisZ"/>
    <property type="match status" value="1"/>
</dbReference>
<dbReference type="InterPro" id="IPR006195">
    <property type="entry name" value="aa-tRNA-synth_II"/>
</dbReference>
<dbReference type="InterPro" id="IPR045864">
    <property type="entry name" value="aa-tRNA-synth_II/BPL/LPL"/>
</dbReference>
<dbReference type="InterPro" id="IPR004154">
    <property type="entry name" value="Anticodon-bd"/>
</dbReference>
<dbReference type="InterPro" id="IPR036621">
    <property type="entry name" value="Anticodon-bd_dom_sf"/>
</dbReference>
<dbReference type="InterPro" id="IPR015807">
    <property type="entry name" value="His-tRNA-ligase"/>
</dbReference>
<dbReference type="InterPro" id="IPR041715">
    <property type="entry name" value="HisRS-like_core"/>
</dbReference>
<dbReference type="InterPro" id="IPR004516">
    <property type="entry name" value="HisRS/HisZ"/>
</dbReference>
<dbReference type="InterPro" id="IPR033656">
    <property type="entry name" value="HisRS_anticodon"/>
</dbReference>
<dbReference type="InterPro" id="IPR004517">
    <property type="entry name" value="HisZ"/>
</dbReference>
<dbReference type="NCBIfam" id="TIGR00442">
    <property type="entry name" value="hisS"/>
    <property type="match status" value="1"/>
</dbReference>
<dbReference type="PANTHER" id="PTHR43707:SF1">
    <property type="entry name" value="HISTIDINE--TRNA LIGASE, MITOCHONDRIAL-RELATED"/>
    <property type="match status" value="1"/>
</dbReference>
<dbReference type="PANTHER" id="PTHR43707">
    <property type="entry name" value="HISTIDYL-TRNA SYNTHETASE"/>
    <property type="match status" value="1"/>
</dbReference>
<dbReference type="Pfam" id="PF03129">
    <property type="entry name" value="HGTP_anticodon"/>
    <property type="match status" value="1"/>
</dbReference>
<dbReference type="Pfam" id="PF13393">
    <property type="entry name" value="tRNA-synt_His"/>
    <property type="match status" value="1"/>
</dbReference>
<dbReference type="PIRSF" id="PIRSF001549">
    <property type="entry name" value="His-tRNA_synth"/>
    <property type="match status" value="1"/>
</dbReference>
<dbReference type="SUPFAM" id="SSF52954">
    <property type="entry name" value="Class II aaRS ABD-related"/>
    <property type="match status" value="1"/>
</dbReference>
<dbReference type="SUPFAM" id="SSF55681">
    <property type="entry name" value="Class II aaRS and biotin synthetases"/>
    <property type="match status" value="1"/>
</dbReference>
<dbReference type="PROSITE" id="PS50862">
    <property type="entry name" value="AA_TRNA_LIGASE_II"/>
    <property type="match status" value="1"/>
</dbReference>
<proteinExistence type="inferred from homology"/>
<reference key="1">
    <citation type="journal article" date="2002" name="Genome Res.">
        <title>The genome of Methanosarcina acetivorans reveals extensive metabolic and physiological diversity.</title>
        <authorList>
            <person name="Galagan J.E."/>
            <person name="Nusbaum C."/>
            <person name="Roy A."/>
            <person name="Endrizzi M.G."/>
            <person name="Macdonald P."/>
            <person name="FitzHugh W."/>
            <person name="Calvo S."/>
            <person name="Engels R."/>
            <person name="Smirnov S."/>
            <person name="Atnoor D."/>
            <person name="Brown A."/>
            <person name="Allen N."/>
            <person name="Naylor J."/>
            <person name="Stange-Thomann N."/>
            <person name="DeArellano K."/>
            <person name="Johnson R."/>
            <person name="Linton L."/>
            <person name="McEwan P."/>
            <person name="McKernan K."/>
            <person name="Talamas J."/>
            <person name="Tirrell A."/>
            <person name="Ye W."/>
            <person name="Zimmer A."/>
            <person name="Barber R.D."/>
            <person name="Cann I."/>
            <person name="Graham D.E."/>
            <person name="Grahame D.A."/>
            <person name="Guss A.M."/>
            <person name="Hedderich R."/>
            <person name="Ingram-Smith C."/>
            <person name="Kuettner H.C."/>
            <person name="Krzycki J.A."/>
            <person name="Leigh J.A."/>
            <person name="Li W."/>
            <person name="Liu J."/>
            <person name="Mukhopadhyay B."/>
            <person name="Reeve J.N."/>
            <person name="Smith K."/>
            <person name="Springer T.A."/>
            <person name="Umayam L.A."/>
            <person name="White O."/>
            <person name="White R.H."/>
            <person name="de Macario E.C."/>
            <person name="Ferry J.G."/>
            <person name="Jarrell K.F."/>
            <person name="Jing H."/>
            <person name="Macario A.J.L."/>
            <person name="Paulsen I.T."/>
            <person name="Pritchett M."/>
            <person name="Sowers K.R."/>
            <person name="Swanson R.V."/>
            <person name="Zinder S.H."/>
            <person name="Lander E."/>
            <person name="Metcalf W.W."/>
            <person name="Birren B."/>
        </authorList>
    </citation>
    <scope>NUCLEOTIDE SEQUENCE [LARGE SCALE GENOMIC DNA]</scope>
    <source>
        <strain>ATCC 35395 / DSM 2834 / JCM 12185 / C2A</strain>
    </source>
</reference>
<name>SYH_METAC</name>